<feature type="chain" id="PRO_1000200460" description="5-oxoprolinase subunit A">
    <location>
        <begin position="1"/>
        <end position="252"/>
    </location>
</feature>
<proteinExistence type="inferred from homology"/>
<sequence length="252" mass="26067">MTVMDLNSDVGEPFGAWGMGDDAAVFRSVSSANVACGFHAGDPSVMAQTCRDAVAAGVTVGAHVAYRDLAGFGRRFLDCSPTELADDVLYQMGALEAVARAAGTTVRYVKPHGALYNTIVHHEAHAQAVVNAVKAFGGDLPLLLLPGSAALRAAEKAGLRAVPEAFADRGYTPEGTLVSRRDPGAVLHDAAQVTERMVRLAEDGTLTAVDGSTVRIHAESICVHGDTPGAAAMAAEVRAGLDRAGITVRSFA</sequence>
<protein>
    <recommendedName>
        <fullName evidence="1">5-oxoprolinase subunit A</fullName>
        <shortName evidence="1">5-OPase subunit A</shortName>
        <ecNumber evidence="1">3.5.2.9</ecNumber>
    </recommendedName>
    <alternativeName>
        <fullName evidence="1">5-oxoprolinase (ATP-hydrolyzing) subunit A</fullName>
    </alternativeName>
</protein>
<dbReference type="EC" id="3.5.2.9" evidence="1"/>
<dbReference type="EMBL" id="AP009152">
    <property type="protein sequence ID" value="BAG30459.1"/>
    <property type="molecule type" value="Genomic_DNA"/>
</dbReference>
<dbReference type="RefSeq" id="WP_012399180.1">
    <property type="nucleotide sequence ID" value="NC_010617.1"/>
</dbReference>
<dbReference type="SMR" id="B2GHI3"/>
<dbReference type="STRING" id="378753.KRH_21120"/>
<dbReference type="KEGG" id="krh:KRH_21120"/>
<dbReference type="eggNOG" id="COG1540">
    <property type="taxonomic scope" value="Bacteria"/>
</dbReference>
<dbReference type="HOGENOM" id="CLU_069535_0_0_11"/>
<dbReference type="OrthoDB" id="9773478at2"/>
<dbReference type="Proteomes" id="UP000008838">
    <property type="component" value="Chromosome"/>
</dbReference>
<dbReference type="GO" id="GO:0017168">
    <property type="term" value="F:5-oxoprolinase (ATP-hydrolyzing) activity"/>
    <property type="evidence" value="ECO:0007669"/>
    <property type="project" value="UniProtKB-UniRule"/>
</dbReference>
<dbReference type="GO" id="GO:0005524">
    <property type="term" value="F:ATP binding"/>
    <property type="evidence" value="ECO:0007669"/>
    <property type="project" value="UniProtKB-UniRule"/>
</dbReference>
<dbReference type="GO" id="GO:0005975">
    <property type="term" value="P:carbohydrate metabolic process"/>
    <property type="evidence" value="ECO:0007669"/>
    <property type="project" value="InterPro"/>
</dbReference>
<dbReference type="CDD" id="cd10787">
    <property type="entry name" value="LamB_YcsF_like"/>
    <property type="match status" value="1"/>
</dbReference>
<dbReference type="Gene3D" id="3.20.20.370">
    <property type="entry name" value="Glycoside hydrolase/deacetylase"/>
    <property type="match status" value="1"/>
</dbReference>
<dbReference type="HAMAP" id="MF_00691">
    <property type="entry name" value="PxpA"/>
    <property type="match status" value="1"/>
</dbReference>
<dbReference type="InterPro" id="IPR011330">
    <property type="entry name" value="Glyco_hydro/deAcase_b/a-brl"/>
</dbReference>
<dbReference type="InterPro" id="IPR005501">
    <property type="entry name" value="LamB/YcsF/PxpA-like"/>
</dbReference>
<dbReference type="NCBIfam" id="NF003814">
    <property type="entry name" value="PRK05406.1-3"/>
    <property type="match status" value="1"/>
</dbReference>
<dbReference type="NCBIfam" id="NF003816">
    <property type="entry name" value="PRK05406.1-5"/>
    <property type="match status" value="1"/>
</dbReference>
<dbReference type="PANTHER" id="PTHR30292:SF0">
    <property type="entry name" value="5-OXOPROLINASE SUBUNIT A"/>
    <property type="match status" value="1"/>
</dbReference>
<dbReference type="PANTHER" id="PTHR30292">
    <property type="entry name" value="UNCHARACTERIZED PROTEIN YBGL-RELATED"/>
    <property type="match status" value="1"/>
</dbReference>
<dbReference type="Pfam" id="PF03746">
    <property type="entry name" value="LamB_YcsF"/>
    <property type="match status" value="1"/>
</dbReference>
<dbReference type="SUPFAM" id="SSF88713">
    <property type="entry name" value="Glycoside hydrolase/deacetylase"/>
    <property type="match status" value="1"/>
</dbReference>
<reference key="1">
    <citation type="journal article" date="2008" name="J. Bacteriol.">
        <title>Complete genome sequence of the soil actinomycete Kocuria rhizophila.</title>
        <authorList>
            <person name="Takarada H."/>
            <person name="Sekine M."/>
            <person name="Kosugi H."/>
            <person name="Matsuo Y."/>
            <person name="Fujisawa T."/>
            <person name="Omata S."/>
            <person name="Kishi E."/>
            <person name="Shimizu A."/>
            <person name="Tsukatani N."/>
            <person name="Tanikawa S."/>
            <person name="Fujita N."/>
            <person name="Harayama S."/>
        </authorList>
    </citation>
    <scope>NUCLEOTIDE SEQUENCE [LARGE SCALE GENOMIC DNA]</scope>
    <source>
        <strain>ATCC 9341 / DSM 348 / NBRC 103217 / DC2201</strain>
    </source>
</reference>
<organism>
    <name type="scientific">Kocuria rhizophila (strain ATCC 9341 / DSM 348 / NBRC 103217 / DC2201)</name>
    <dbReference type="NCBI Taxonomy" id="378753"/>
    <lineage>
        <taxon>Bacteria</taxon>
        <taxon>Bacillati</taxon>
        <taxon>Actinomycetota</taxon>
        <taxon>Actinomycetes</taxon>
        <taxon>Micrococcales</taxon>
        <taxon>Micrococcaceae</taxon>
        <taxon>Kocuria</taxon>
    </lineage>
</organism>
<evidence type="ECO:0000255" key="1">
    <source>
        <dbReference type="HAMAP-Rule" id="MF_00691"/>
    </source>
</evidence>
<keyword id="KW-0067">ATP-binding</keyword>
<keyword id="KW-0378">Hydrolase</keyword>
<keyword id="KW-0547">Nucleotide-binding</keyword>
<keyword id="KW-1185">Reference proteome</keyword>
<gene>
    <name evidence="1" type="primary">pxpA</name>
    <name type="ordered locus">KRH_21120</name>
</gene>
<comment type="function">
    <text evidence="1">Catalyzes the cleavage of 5-oxoproline to form L-glutamate coupled to the hydrolysis of ATP to ADP and inorganic phosphate.</text>
</comment>
<comment type="catalytic activity">
    <reaction evidence="1">
        <text>5-oxo-L-proline + ATP + 2 H2O = L-glutamate + ADP + phosphate + H(+)</text>
        <dbReference type="Rhea" id="RHEA:10348"/>
        <dbReference type="ChEBI" id="CHEBI:15377"/>
        <dbReference type="ChEBI" id="CHEBI:15378"/>
        <dbReference type="ChEBI" id="CHEBI:29985"/>
        <dbReference type="ChEBI" id="CHEBI:30616"/>
        <dbReference type="ChEBI" id="CHEBI:43474"/>
        <dbReference type="ChEBI" id="CHEBI:58402"/>
        <dbReference type="ChEBI" id="CHEBI:456216"/>
        <dbReference type="EC" id="3.5.2.9"/>
    </reaction>
</comment>
<comment type="subunit">
    <text evidence="1">Forms a complex composed of PxpA, PxpB and PxpC.</text>
</comment>
<comment type="similarity">
    <text evidence="1">Belongs to the LamB/PxpA family.</text>
</comment>
<name>PXPA_KOCRD</name>
<accession>B2GHI3</accession>